<comment type="function">
    <text evidence="5 6 7 10">Part of the qa gene cluster that mediates the catabolism of quinic acid (QA) and as such, allows the use of QA as a sole carbon source (PubMed:19236936, PubMed:2525625, PubMed:6458044). Its function within the pathway has not been determined yet but it probably plays a regulatory role (PubMed:19236936). The qa cluster encodes 3 inducible enymes (qa-2, qa-3 and qa-4) catalyzing the first three reactions in the catabolism of quinic acid to protocatechuic acid (also known as 3,4-Dihydroxybenzoic acid) (Probable).</text>
</comment>
<comment type="induction">
    <text evidence="2 4 5 7">Expression is induced in the presence of quinic acid (PubMed:6458044). The quinic acid (qa) gene cluster is subject to two levels of gene control: a primary system which responds to the presence of quinic acid via the qa-1S repressor protein that blocks the qa-1F activator, and a secondary system which represses transcription of qa genes in the presence of a preferred carbon source such as glucose (PubMed:12477937, PubMed:17597928, PubMed:19236936, PubMed:6458044).</text>
</comment>
<comment type="disruption phenotype">
    <text evidence="3">Does not affect carbon mediated repression of qa-2 and qa-y.</text>
</comment>
<comment type="similarity">
    <text evidence="9">Belongs to the inositol monophosphatase superfamily.</text>
</comment>
<organism>
    <name type="scientific">Neurospora crassa (strain ATCC 24698 / 74-OR23-1A / CBS 708.71 / DSM 1257 / FGSC 987)</name>
    <dbReference type="NCBI Taxonomy" id="367110"/>
    <lineage>
        <taxon>Eukaryota</taxon>
        <taxon>Fungi</taxon>
        <taxon>Dikarya</taxon>
        <taxon>Ascomycota</taxon>
        <taxon>Pezizomycotina</taxon>
        <taxon>Sordariomycetes</taxon>
        <taxon>Sordariomycetidae</taxon>
        <taxon>Sordariales</taxon>
        <taxon>Sordariaceae</taxon>
        <taxon>Neurospora</taxon>
    </lineage>
</organism>
<sequence>MTSRTTTATELDEIYTFAVQLGKDAGNLLMEAARLRFSNNNANHDKESTTQEFTEKDSAVDIVTQTDEDVEAFIKSAINTRYPSHDFIGEETYAKSSQSTRPYLVTHTTPTWVVDPLDGTVNYTHLFPMFCVSIAFLVDGTPVIGVICAPMLGQLFTACKGRGAWLNETQRLPLVRQPMPKSAPGGCVFSCEWGKDRKDRPEGNLYRKVESFVNMAAEVGGRGGKGGMVHGVRSLGSATLDLAYTAMGSFDIWWEGGCWEWDVAAGIAILQEAGGLITSANPPEDWATAEIPDVKLGSRLYLVVRPAGPSEGETAREGQERTIREVWRRVRALDYTRPGA</sequence>
<evidence type="ECO:0000250" key="1"/>
<evidence type="ECO:0000269" key="2">
    <source>
    </source>
</evidence>
<evidence type="ECO:0000269" key="3">
    <source>
    </source>
</evidence>
<evidence type="ECO:0000269" key="4">
    <source>
    </source>
</evidence>
<evidence type="ECO:0000269" key="5">
    <source>
    </source>
</evidence>
<evidence type="ECO:0000269" key="6">
    <source>
    </source>
</evidence>
<evidence type="ECO:0000269" key="7">
    <source>
    </source>
</evidence>
<evidence type="ECO:0000303" key="8">
    <source>
    </source>
</evidence>
<evidence type="ECO:0000305" key="9"/>
<evidence type="ECO:0000305" key="10">
    <source>
    </source>
</evidence>
<proteinExistence type="evidence at transcript level"/>
<dbReference type="EMBL" id="X14603">
    <property type="protein sequence ID" value="CAA32748.1"/>
    <property type="molecule type" value="Genomic_DNA"/>
</dbReference>
<dbReference type="EMBL" id="CM002242">
    <property type="protein sequence ID" value="EAA30376.1"/>
    <property type="molecule type" value="Genomic_DNA"/>
</dbReference>
<dbReference type="PIR" id="S04250">
    <property type="entry name" value="B31277"/>
</dbReference>
<dbReference type="RefSeq" id="XP_959612.1">
    <property type="nucleotide sequence ID" value="XM_954519.1"/>
</dbReference>
<dbReference type="SMR" id="P11634"/>
<dbReference type="STRING" id="367110.P11634"/>
<dbReference type="PaxDb" id="5141-EFNCRP00000005413"/>
<dbReference type="EnsemblFungi" id="EAA30376">
    <property type="protein sequence ID" value="EAA30376"/>
    <property type="gene ID" value="NCU06022"/>
</dbReference>
<dbReference type="GeneID" id="3875771"/>
<dbReference type="KEGG" id="ncr:NCU06022"/>
<dbReference type="VEuPathDB" id="FungiDB:NCU06022"/>
<dbReference type="HOGENOM" id="CLU_044118_1_2_1"/>
<dbReference type="InParanoid" id="P11634"/>
<dbReference type="OMA" id="QTIHYGR"/>
<dbReference type="OrthoDB" id="10254945at2759"/>
<dbReference type="Proteomes" id="UP000001805">
    <property type="component" value="Chromosome 7, Linkage Group VII"/>
</dbReference>
<dbReference type="GO" id="GO:0008934">
    <property type="term" value="F:inositol monophosphate 1-phosphatase activity"/>
    <property type="evidence" value="ECO:0000318"/>
    <property type="project" value="GO_Central"/>
</dbReference>
<dbReference type="GO" id="GO:0046872">
    <property type="term" value="F:metal ion binding"/>
    <property type="evidence" value="ECO:0007669"/>
    <property type="project" value="UniProtKB-KW"/>
</dbReference>
<dbReference type="GO" id="GO:0006020">
    <property type="term" value="P:inositol metabolic process"/>
    <property type="evidence" value="ECO:0000318"/>
    <property type="project" value="GO_Central"/>
</dbReference>
<dbReference type="GO" id="GO:0046854">
    <property type="term" value="P:phosphatidylinositol phosphate biosynthetic process"/>
    <property type="evidence" value="ECO:0007669"/>
    <property type="project" value="InterPro"/>
</dbReference>
<dbReference type="GO" id="GO:0019630">
    <property type="term" value="P:quinate metabolic process"/>
    <property type="evidence" value="ECO:0007669"/>
    <property type="project" value="UniProtKB-KW"/>
</dbReference>
<dbReference type="GO" id="GO:0007165">
    <property type="term" value="P:signal transduction"/>
    <property type="evidence" value="ECO:0000318"/>
    <property type="project" value="GO_Central"/>
</dbReference>
<dbReference type="CDD" id="cd01639">
    <property type="entry name" value="IMPase"/>
    <property type="match status" value="1"/>
</dbReference>
<dbReference type="FunFam" id="3.30.540.10:FF:000004">
    <property type="entry name" value="Inositol-1-monophosphatase"/>
    <property type="match status" value="1"/>
</dbReference>
<dbReference type="FunFam" id="3.40.190.80:FF:000019">
    <property type="entry name" value="Inositol-1-monophosphatase"/>
    <property type="match status" value="1"/>
</dbReference>
<dbReference type="Gene3D" id="3.40.190.80">
    <property type="match status" value="1"/>
</dbReference>
<dbReference type="Gene3D" id="3.30.540.10">
    <property type="entry name" value="Fructose-1,6-Bisphosphatase, subunit A, domain 1"/>
    <property type="match status" value="1"/>
</dbReference>
<dbReference type="InterPro" id="IPR033942">
    <property type="entry name" value="IMPase"/>
</dbReference>
<dbReference type="InterPro" id="IPR020583">
    <property type="entry name" value="Inositol_monoP_metal-BS"/>
</dbReference>
<dbReference type="InterPro" id="IPR000760">
    <property type="entry name" value="Inositol_monophosphatase-like"/>
</dbReference>
<dbReference type="InterPro" id="IPR020550">
    <property type="entry name" value="Inositol_monophosphatase_CS"/>
</dbReference>
<dbReference type="PANTHER" id="PTHR20854">
    <property type="entry name" value="INOSITOL MONOPHOSPHATASE"/>
    <property type="match status" value="1"/>
</dbReference>
<dbReference type="PANTHER" id="PTHR20854:SF39">
    <property type="entry name" value="PROTEIN QUTG"/>
    <property type="match status" value="1"/>
</dbReference>
<dbReference type="Pfam" id="PF00459">
    <property type="entry name" value="Inositol_P"/>
    <property type="match status" value="1"/>
</dbReference>
<dbReference type="PRINTS" id="PR00377">
    <property type="entry name" value="IMPHPHTASES"/>
</dbReference>
<dbReference type="SUPFAM" id="SSF56655">
    <property type="entry name" value="Carbohydrate phosphatase"/>
    <property type="match status" value="1"/>
</dbReference>
<dbReference type="PROSITE" id="PS00629">
    <property type="entry name" value="IMP_1"/>
    <property type="match status" value="1"/>
</dbReference>
<dbReference type="PROSITE" id="PS00630">
    <property type="entry name" value="IMP_2"/>
    <property type="match status" value="1"/>
</dbReference>
<protein>
    <recommendedName>
        <fullName evidence="8">Quinic acid degradation cluster protein x</fullName>
    </recommendedName>
</protein>
<accession>P11634</accession>
<accession>Q7RVA4</accession>
<name>QAX_NEUCR</name>
<keyword id="KW-0460">Magnesium</keyword>
<keyword id="KW-0479">Metal-binding</keyword>
<keyword id="KW-0672">Quinate metabolism</keyword>
<keyword id="KW-1185">Reference proteome</keyword>
<gene>
    <name evidence="8" type="primary">qa-x</name>
    <name type="ORF">NCU06022</name>
</gene>
<feature type="chain" id="PRO_0000142539" description="Quinic acid degradation cluster protein x">
    <location>
        <begin position="1"/>
        <end position="340"/>
    </location>
</feature>
<feature type="binding site" evidence="1">
    <location>
        <position position="90"/>
    </location>
    <ligand>
        <name>Mg(2+)</name>
        <dbReference type="ChEBI" id="CHEBI:18420"/>
        <label>1</label>
    </ligand>
</feature>
<feature type="binding site" evidence="1">
    <location>
        <position position="90"/>
    </location>
    <ligand>
        <name>substrate</name>
    </ligand>
</feature>
<feature type="binding site" evidence="1">
    <location>
        <position position="115"/>
    </location>
    <ligand>
        <name>Mg(2+)</name>
        <dbReference type="ChEBI" id="CHEBI:18420"/>
        <label>1</label>
    </ligand>
</feature>
<feature type="binding site" evidence="1">
    <location>
        <position position="115"/>
    </location>
    <ligand>
        <name>Mg(2+)</name>
        <dbReference type="ChEBI" id="CHEBI:18420"/>
        <label>2</label>
    </ligand>
</feature>
<feature type="binding site" evidence="1">
    <location>
        <begin position="117"/>
        <end position="120"/>
    </location>
    <ligand>
        <name>substrate</name>
    </ligand>
</feature>
<feature type="binding site" evidence="1">
    <location>
        <position position="117"/>
    </location>
    <ligand>
        <name>Mg(2+)</name>
        <dbReference type="ChEBI" id="CHEBI:18420"/>
        <label>1</label>
    </ligand>
</feature>
<feature type="binding site" evidence="1">
    <location>
        <position position="118"/>
    </location>
    <ligand>
        <name>Mg(2+)</name>
        <dbReference type="ChEBI" id="CHEBI:18420"/>
        <label>2</label>
    </ligand>
</feature>
<feature type="binding site" evidence="1">
    <location>
        <position position="262"/>
    </location>
    <ligand>
        <name>Mg(2+)</name>
        <dbReference type="ChEBI" id="CHEBI:18420"/>
        <label>2</label>
    </ligand>
</feature>
<feature type="binding site" evidence="1">
    <location>
        <position position="262"/>
    </location>
    <ligand>
        <name>substrate</name>
    </ligand>
</feature>
<reference key="1">
    <citation type="journal article" date="1989" name="J. Mol. Biol.">
        <title>DNA sequence, organization and regulation of the qa gene cluster of Neurospora crassa.</title>
        <authorList>
            <person name="Geever R.F."/>
            <person name="Huiet L."/>
            <person name="Baum J.A."/>
            <person name="Tyler B.M."/>
            <person name="Patel V.B."/>
            <person name="Rutledge B.J."/>
            <person name="Case M.E."/>
            <person name="Giles N.H."/>
        </authorList>
    </citation>
    <scope>NUCLEOTIDE SEQUENCE [GENOMIC DNA]</scope>
    <scope>FUNCTION</scope>
    <source>
        <strain>ATCC 24698 / 74-OR23-1A / CBS 708.71 / DSM 1257 / FGSC 987</strain>
    </source>
</reference>
<reference key="2">
    <citation type="journal article" date="2003" name="Nature">
        <title>The genome sequence of the filamentous fungus Neurospora crassa.</title>
        <authorList>
            <person name="Galagan J.E."/>
            <person name="Calvo S.E."/>
            <person name="Borkovich K.A."/>
            <person name="Selker E.U."/>
            <person name="Read N.D."/>
            <person name="Jaffe D.B."/>
            <person name="FitzHugh W."/>
            <person name="Ma L.-J."/>
            <person name="Smirnov S."/>
            <person name="Purcell S."/>
            <person name="Rehman B."/>
            <person name="Elkins T."/>
            <person name="Engels R."/>
            <person name="Wang S."/>
            <person name="Nielsen C.B."/>
            <person name="Butler J."/>
            <person name="Endrizzi M."/>
            <person name="Qui D."/>
            <person name="Ianakiev P."/>
            <person name="Bell-Pedersen D."/>
            <person name="Nelson M.A."/>
            <person name="Werner-Washburne M."/>
            <person name="Selitrennikoff C.P."/>
            <person name="Kinsey J.A."/>
            <person name="Braun E.L."/>
            <person name="Zelter A."/>
            <person name="Schulte U."/>
            <person name="Kothe G.O."/>
            <person name="Jedd G."/>
            <person name="Mewes H.-W."/>
            <person name="Staben C."/>
            <person name="Marcotte E."/>
            <person name="Greenberg D."/>
            <person name="Roy A."/>
            <person name="Foley K."/>
            <person name="Naylor J."/>
            <person name="Stange-Thomann N."/>
            <person name="Barrett R."/>
            <person name="Gnerre S."/>
            <person name="Kamal M."/>
            <person name="Kamvysselis M."/>
            <person name="Mauceli E.W."/>
            <person name="Bielke C."/>
            <person name="Rudd S."/>
            <person name="Frishman D."/>
            <person name="Krystofova S."/>
            <person name="Rasmussen C."/>
            <person name="Metzenberg R.L."/>
            <person name="Perkins D.D."/>
            <person name="Kroken S."/>
            <person name="Cogoni C."/>
            <person name="Macino G."/>
            <person name="Catcheside D.E.A."/>
            <person name="Li W."/>
            <person name="Pratt R.J."/>
            <person name="Osmani S.A."/>
            <person name="DeSouza C.P.C."/>
            <person name="Glass N.L."/>
            <person name="Orbach M.J."/>
            <person name="Berglund J.A."/>
            <person name="Voelker R."/>
            <person name="Yarden O."/>
            <person name="Plamann M."/>
            <person name="Seiler S."/>
            <person name="Dunlap J.C."/>
            <person name="Radford A."/>
            <person name="Aramayo R."/>
            <person name="Natvig D.O."/>
            <person name="Alex L.A."/>
            <person name="Mannhaupt G."/>
            <person name="Ebbole D.J."/>
            <person name="Freitag M."/>
            <person name="Paulsen I."/>
            <person name="Sachs M.S."/>
            <person name="Lander E.S."/>
            <person name="Nusbaum C."/>
            <person name="Birren B.W."/>
        </authorList>
    </citation>
    <scope>NUCLEOTIDE SEQUENCE [LARGE SCALE GENOMIC DNA]</scope>
    <source>
        <strain>ATCC 24698 / 74-OR23-1A / CBS 708.71 / DSM 1257 / FGSC 987</strain>
    </source>
</reference>
<reference key="3">
    <citation type="journal article" date="1981" name="Proc. Natl. Acad. Sci. U.S.A.">
        <title>Genetic organization and transcriptional regulation in the qa gene cluster of Neurospora crassa.</title>
        <authorList>
            <person name="Patel V.B."/>
            <person name="Schweizer M."/>
            <person name="Dykstra C.C."/>
            <person name="Kushner S.R."/>
            <person name="Giles N.H."/>
        </authorList>
    </citation>
    <scope>FUNCTION</scope>
    <scope>INDUCTION</scope>
</reference>
<reference key="4">
    <citation type="journal article" date="1992" name="Genetics">
        <title>Use of gene replacement transformation to elucidate gene function in the qa gene cluster of Neurospora crassa.</title>
        <authorList>
            <person name="Case M.E."/>
            <person name="Geever R.F."/>
            <person name="Asch D.K."/>
        </authorList>
    </citation>
    <scope>DISRUPTION PHENOTYPE</scope>
</reference>
<reference key="5">
    <citation type="journal article" date="2002" name="Proc. Natl. Acad. Sci. U.S.A.">
        <title>An ensemble method for identifying regulatory circuits with special reference to the qa gene cluster of Neurospora crassa.</title>
        <authorList>
            <person name="Battogtokh D."/>
            <person name="Asch D.K."/>
            <person name="Case M.E."/>
            <person name="Arnold J."/>
            <person name="Schuttler H.B."/>
        </authorList>
    </citation>
    <scope>INDUCTION</scope>
</reference>
<reference key="6">
    <citation type="journal article" date="2007" name="Bioinformation">
        <title>Genome-wide expression analysis of genetic networks in Neurospora crassa.</title>
        <authorList>
            <person name="Logan D.A."/>
            <person name="Koch A.L."/>
            <person name="Dong W."/>
            <person name="Griffith J."/>
            <person name="Nilsen R."/>
            <person name="Case M.E."/>
            <person name="Schuettler H.B."/>
            <person name="Arnold J."/>
        </authorList>
    </citation>
    <scope>INDUCTION</scope>
</reference>
<reference key="7">
    <citation type="journal article" date="2009" name="Fungal Genet. Biol.">
        <title>Catabolite repression directly affects transcription of the qa-y gene of Neurospora crassa.</title>
        <authorList>
            <person name="Arnett D.R."/>
            <person name="Lorimer H.E."/>
            <person name="Asch D.K."/>
        </authorList>
    </citation>
    <scope>FUNCTION</scope>
    <scope>DISRUPTION PHENOTYPE</scope>
    <scope>INDUCTION</scope>
</reference>